<sequence length="586" mass="68076">MRTKYCGNIRISHVNKKVKLCGWVHKVRNLGQFIFVDMRDYTGLVQVIFELKNYTIFKKALNLRNEFCIQVFGTVQKREKKNQNIKIRTGEIEILANVLNILNTSKSLPLNFTQENNDDSRLKYRYLDLRSFDILENLKIRNKITYLIRNFMTKKNFLDIETPILTKSTPEGARDYLVPSRNHYGKFYALPQSPQLFKQILMISGIDRYYQIVKCFRDEDLRSDRQPEFTQIDIEVSFMSAKKIRNLVENLIKKLWLEIRNINLKKFPQISFHEAMKKYGSDKPDLRNPIEIIDVSNIFKDKKFISFFNLNPQKNNRIALLCISKGAHLSRKKIDDYTKYVQRFDAKKLFYIKIKECKLGCLGIHSSIKNILDEIILKEIIEKSQSKNGDILFLIADQEHIVNKSLGMLRLKIGIDLNITKKNRWEPLWIVNFPMFDKDIQGNLSSVHHPFTAVKNMDREILKNSPDLAISDSYDLIINGYEIGGGSVRIHDVNMQKQVFDIIGIKKSMQNEKFGFLIEALKYGAPPHAGIALGLDRIVMLLTNSKNIRDVIAFPKTTSATCLMTNSPSTVDNLLLQELAIKHLKK</sequence>
<accession>B8D7K8</accession>
<name>SYD_BUCAT</name>
<protein>
    <recommendedName>
        <fullName evidence="1">Aspartate--tRNA ligase</fullName>
        <ecNumber evidence="1">6.1.1.12</ecNumber>
    </recommendedName>
    <alternativeName>
        <fullName evidence="1">Aspartyl-tRNA synthetase</fullName>
        <shortName evidence="1">AspRS</shortName>
    </alternativeName>
</protein>
<proteinExistence type="inferred from homology"/>
<comment type="function">
    <text evidence="1">Catalyzes the attachment of L-aspartate to tRNA(Asp) in a two-step reaction: L-aspartate is first activated by ATP to form Asp-AMP and then transferred to the acceptor end of tRNA(Asp).</text>
</comment>
<comment type="catalytic activity">
    <reaction evidence="1">
        <text>tRNA(Asp) + L-aspartate + ATP = L-aspartyl-tRNA(Asp) + AMP + diphosphate</text>
        <dbReference type="Rhea" id="RHEA:19649"/>
        <dbReference type="Rhea" id="RHEA-COMP:9660"/>
        <dbReference type="Rhea" id="RHEA-COMP:9678"/>
        <dbReference type="ChEBI" id="CHEBI:29991"/>
        <dbReference type="ChEBI" id="CHEBI:30616"/>
        <dbReference type="ChEBI" id="CHEBI:33019"/>
        <dbReference type="ChEBI" id="CHEBI:78442"/>
        <dbReference type="ChEBI" id="CHEBI:78516"/>
        <dbReference type="ChEBI" id="CHEBI:456215"/>
        <dbReference type="EC" id="6.1.1.12"/>
    </reaction>
</comment>
<comment type="subunit">
    <text evidence="1">Homodimer.</text>
</comment>
<comment type="subcellular location">
    <subcellularLocation>
        <location evidence="1">Cytoplasm</location>
    </subcellularLocation>
</comment>
<comment type="similarity">
    <text evidence="1">Belongs to the class-II aminoacyl-tRNA synthetase family. Type 1 subfamily.</text>
</comment>
<feature type="chain" id="PRO_1000198968" description="Aspartate--tRNA ligase">
    <location>
        <begin position="1"/>
        <end position="586"/>
    </location>
</feature>
<feature type="region of interest" description="Aspartate" evidence="1">
    <location>
        <begin position="195"/>
        <end position="198"/>
    </location>
</feature>
<feature type="binding site" evidence="1">
    <location>
        <position position="171"/>
    </location>
    <ligand>
        <name>L-aspartate</name>
        <dbReference type="ChEBI" id="CHEBI:29991"/>
    </ligand>
</feature>
<feature type="binding site" evidence="1">
    <location>
        <begin position="217"/>
        <end position="219"/>
    </location>
    <ligand>
        <name>ATP</name>
        <dbReference type="ChEBI" id="CHEBI:30616"/>
    </ligand>
</feature>
<feature type="binding site" evidence="1">
    <location>
        <position position="217"/>
    </location>
    <ligand>
        <name>L-aspartate</name>
        <dbReference type="ChEBI" id="CHEBI:29991"/>
    </ligand>
</feature>
<feature type="binding site" evidence="1">
    <location>
        <position position="226"/>
    </location>
    <ligand>
        <name>ATP</name>
        <dbReference type="ChEBI" id="CHEBI:30616"/>
    </ligand>
</feature>
<feature type="binding site" evidence="1">
    <location>
        <position position="448"/>
    </location>
    <ligand>
        <name>L-aspartate</name>
        <dbReference type="ChEBI" id="CHEBI:29991"/>
    </ligand>
</feature>
<feature type="binding site" evidence="1">
    <location>
        <position position="482"/>
    </location>
    <ligand>
        <name>ATP</name>
        <dbReference type="ChEBI" id="CHEBI:30616"/>
    </ligand>
</feature>
<feature type="binding site" evidence="1">
    <location>
        <position position="489"/>
    </location>
    <ligand>
        <name>L-aspartate</name>
        <dbReference type="ChEBI" id="CHEBI:29991"/>
    </ligand>
</feature>
<feature type="binding site" evidence="1">
    <location>
        <begin position="534"/>
        <end position="537"/>
    </location>
    <ligand>
        <name>ATP</name>
        <dbReference type="ChEBI" id="CHEBI:30616"/>
    </ligand>
</feature>
<organism>
    <name type="scientific">Buchnera aphidicola subsp. Acyrthosiphon pisum (strain Tuc7)</name>
    <dbReference type="NCBI Taxonomy" id="561501"/>
    <lineage>
        <taxon>Bacteria</taxon>
        <taxon>Pseudomonadati</taxon>
        <taxon>Pseudomonadota</taxon>
        <taxon>Gammaproteobacteria</taxon>
        <taxon>Enterobacterales</taxon>
        <taxon>Erwiniaceae</taxon>
        <taxon>Buchnera</taxon>
    </lineage>
</organism>
<gene>
    <name evidence="1" type="primary">aspS</name>
    <name type="ordered locus">BUAPTUC7_310</name>
</gene>
<dbReference type="EC" id="6.1.1.12" evidence="1"/>
<dbReference type="EMBL" id="CP001158">
    <property type="protein sequence ID" value="ACL30123.1"/>
    <property type="molecule type" value="Genomic_DNA"/>
</dbReference>
<dbReference type="RefSeq" id="WP_009874270.1">
    <property type="nucleotide sequence ID" value="NC_011834.1"/>
</dbReference>
<dbReference type="SMR" id="B8D7K8"/>
<dbReference type="KEGG" id="bau:BUAPTUC7_310"/>
<dbReference type="HOGENOM" id="CLU_014330_3_2_6"/>
<dbReference type="GO" id="GO:0005737">
    <property type="term" value="C:cytoplasm"/>
    <property type="evidence" value="ECO:0007669"/>
    <property type="project" value="UniProtKB-SubCell"/>
</dbReference>
<dbReference type="GO" id="GO:0004815">
    <property type="term" value="F:aspartate-tRNA ligase activity"/>
    <property type="evidence" value="ECO:0007669"/>
    <property type="project" value="UniProtKB-UniRule"/>
</dbReference>
<dbReference type="GO" id="GO:0005524">
    <property type="term" value="F:ATP binding"/>
    <property type="evidence" value="ECO:0007669"/>
    <property type="project" value="UniProtKB-UniRule"/>
</dbReference>
<dbReference type="GO" id="GO:0003676">
    <property type="term" value="F:nucleic acid binding"/>
    <property type="evidence" value="ECO:0007669"/>
    <property type="project" value="InterPro"/>
</dbReference>
<dbReference type="GO" id="GO:0006422">
    <property type="term" value="P:aspartyl-tRNA aminoacylation"/>
    <property type="evidence" value="ECO:0007669"/>
    <property type="project" value="UniProtKB-UniRule"/>
</dbReference>
<dbReference type="CDD" id="cd00777">
    <property type="entry name" value="AspRS_core"/>
    <property type="match status" value="1"/>
</dbReference>
<dbReference type="CDD" id="cd04317">
    <property type="entry name" value="EcAspRS_like_N"/>
    <property type="match status" value="1"/>
</dbReference>
<dbReference type="Gene3D" id="3.30.930.10">
    <property type="entry name" value="Bira Bifunctional Protein, Domain 2"/>
    <property type="match status" value="1"/>
</dbReference>
<dbReference type="Gene3D" id="3.30.1360.30">
    <property type="entry name" value="GAD-like domain"/>
    <property type="match status" value="1"/>
</dbReference>
<dbReference type="Gene3D" id="2.40.50.140">
    <property type="entry name" value="Nucleic acid-binding proteins"/>
    <property type="match status" value="1"/>
</dbReference>
<dbReference type="HAMAP" id="MF_00044">
    <property type="entry name" value="Asp_tRNA_synth_type1"/>
    <property type="match status" value="1"/>
</dbReference>
<dbReference type="InterPro" id="IPR004364">
    <property type="entry name" value="Aa-tRNA-synt_II"/>
</dbReference>
<dbReference type="InterPro" id="IPR006195">
    <property type="entry name" value="aa-tRNA-synth_II"/>
</dbReference>
<dbReference type="InterPro" id="IPR045864">
    <property type="entry name" value="aa-tRNA-synth_II/BPL/LPL"/>
</dbReference>
<dbReference type="InterPro" id="IPR004524">
    <property type="entry name" value="Asp-tRNA-ligase_1"/>
</dbReference>
<dbReference type="InterPro" id="IPR047089">
    <property type="entry name" value="Asp-tRNA-ligase_1_N"/>
</dbReference>
<dbReference type="InterPro" id="IPR002312">
    <property type="entry name" value="Asp/Asn-tRNA-synth_IIb"/>
</dbReference>
<dbReference type="InterPro" id="IPR047090">
    <property type="entry name" value="AspRS_core"/>
</dbReference>
<dbReference type="InterPro" id="IPR004115">
    <property type="entry name" value="GAD-like_sf"/>
</dbReference>
<dbReference type="InterPro" id="IPR029351">
    <property type="entry name" value="GAD_dom"/>
</dbReference>
<dbReference type="InterPro" id="IPR012340">
    <property type="entry name" value="NA-bd_OB-fold"/>
</dbReference>
<dbReference type="InterPro" id="IPR004365">
    <property type="entry name" value="NA-bd_OB_tRNA"/>
</dbReference>
<dbReference type="NCBIfam" id="TIGR00459">
    <property type="entry name" value="aspS_bact"/>
    <property type="match status" value="1"/>
</dbReference>
<dbReference type="NCBIfam" id="NF001750">
    <property type="entry name" value="PRK00476.1"/>
    <property type="match status" value="1"/>
</dbReference>
<dbReference type="PANTHER" id="PTHR22594:SF5">
    <property type="entry name" value="ASPARTATE--TRNA LIGASE, MITOCHONDRIAL"/>
    <property type="match status" value="1"/>
</dbReference>
<dbReference type="PANTHER" id="PTHR22594">
    <property type="entry name" value="ASPARTYL/LYSYL-TRNA SYNTHETASE"/>
    <property type="match status" value="1"/>
</dbReference>
<dbReference type="Pfam" id="PF02938">
    <property type="entry name" value="GAD"/>
    <property type="match status" value="1"/>
</dbReference>
<dbReference type="Pfam" id="PF00152">
    <property type="entry name" value="tRNA-synt_2"/>
    <property type="match status" value="1"/>
</dbReference>
<dbReference type="Pfam" id="PF01336">
    <property type="entry name" value="tRNA_anti-codon"/>
    <property type="match status" value="1"/>
</dbReference>
<dbReference type="PRINTS" id="PR01042">
    <property type="entry name" value="TRNASYNTHASP"/>
</dbReference>
<dbReference type="SUPFAM" id="SSF55681">
    <property type="entry name" value="Class II aaRS and biotin synthetases"/>
    <property type="match status" value="1"/>
</dbReference>
<dbReference type="SUPFAM" id="SSF55261">
    <property type="entry name" value="GAD domain-like"/>
    <property type="match status" value="1"/>
</dbReference>
<dbReference type="SUPFAM" id="SSF50249">
    <property type="entry name" value="Nucleic acid-binding proteins"/>
    <property type="match status" value="1"/>
</dbReference>
<dbReference type="PROSITE" id="PS50862">
    <property type="entry name" value="AA_TRNA_LIGASE_II"/>
    <property type="match status" value="1"/>
</dbReference>
<reference key="1">
    <citation type="journal article" date="2009" name="Science">
        <title>The dynamics and time scale of ongoing genomic erosion in symbiotic bacteria.</title>
        <authorList>
            <person name="Moran N.A."/>
            <person name="McLaughlin H.J."/>
            <person name="Sorek R."/>
        </authorList>
    </citation>
    <scope>NUCLEOTIDE SEQUENCE [LARGE SCALE GENOMIC DNA]</scope>
    <source>
        <strain>Tuc7</strain>
    </source>
</reference>
<keyword id="KW-0030">Aminoacyl-tRNA synthetase</keyword>
<keyword id="KW-0067">ATP-binding</keyword>
<keyword id="KW-0963">Cytoplasm</keyword>
<keyword id="KW-0436">Ligase</keyword>
<keyword id="KW-0547">Nucleotide-binding</keyword>
<keyword id="KW-0648">Protein biosynthesis</keyword>
<evidence type="ECO:0000255" key="1">
    <source>
        <dbReference type="HAMAP-Rule" id="MF_00044"/>
    </source>
</evidence>